<comment type="function">
    <text evidence="1">Major role in the synthesis of nucleoside triphosphates other than ATP. The ATP gamma phosphate is transferred to the NDP beta phosphate via a ping-pong mechanism, using a phosphorylated active-site intermediate. Possesses nucleoside-diphosphate kinase, serine/threonine-specific protein kinase, geranyl and farnesyl pyrophosphate kinase, histidine protein kinase and 3'-5' exonuclease activities. Involved in cell proliferation, differentiation and development, signal transduction, G protein-coupled receptor endocytosis, and gene expression. Required for neural development including neural patterning and cell fate determination. During GZMA-mediated cell death, works in concert with TREX1. NME1 nicks one strand of DNA and TREX1 removes bases from the free 3' end to enhance DNA damage and prevent DNA end reannealing and rapid repair (By similarity).</text>
</comment>
<comment type="catalytic activity">
    <reaction>
        <text>a 2'-deoxyribonucleoside 5'-diphosphate + ATP = a 2'-deoxyribonucleoside 5'-triphosphate + ADP</text>
        <dbReference type="Rhea" id="RHEA:44640"/>
        <dbReference type="ChEBI" id="CHEBI:30616"/>
        <dbReference type="ChEBI" id="CHEBI:61560"/>
        <dbReference type="ChEBI" id="CHEBI:73316"/>
        <dbReference type="ChEBI" id="CHEBI:456216"/>
        <dbReference type="EC" id="2.7.4.6"/>
    </reaction>
</comment>
<comment type="catalytic activity">
    <reaction>
        <text>a ribonucleoside 5'-diphosphate + ATP = a ribonucleoside 5'-triphosphate + ADP</text>
        <dbReference type="Rhea" id="RHEA:18113"/>
        <dbReference type="ChEBI" id="CHEBI:30616"/>
        <dbReference type="ChEBI" id="CHEBI:57930"/>
        <dbReference type="ChEBI" id="CHEBI:61557"/>
        <dbReference type="ChEBI" id="CHEBI:456216"/>
        <dbReference type="EC" id="2.7.4.6"/>
    </reaction>
</comment>
<comment type="cofactor">
    <cofactor evidence="1">
        <name>Mg(2+)</name>
        <dbReference type="ChEBI" id="CHEBI:18420"/>
    </cofactor>
</comment>
<comment type="activity regulation">
    <text evidence="1">Autophosphorylation at His-118 increases serine/threonine protein kinase activity of the enzyme. Interaction with the SET complex inhibits exonuclease activity (By similarity).</text>
</comment>
<comment type="subunit">
    <text evidence="2">Hexamer of two different chains: A and B (A6, A5B, A4B2, A3B3, A2B4, AB5, B6). Interacts with PRUNE1. Component of the SET complex, composed of at least ANP32A, APEX1, HMGB2, NME1, SET and TREX1. Within this complex, interacts directly with SET. Also interacts with TREX1, but only following translocation to the nucleus.</text>
</comment>
<comment type="subcellular location">
    <subcellularLocation>
        <location evidence="1">Cytoplasm</location>
    </subcellularLocation>
    <subcellularLocation>
        <location evidence="1">Nucleus</location>
    </subcellularLocation>
</comment>
<comment type="similarity">
    <text evidence="3">Belongs to the NDK family.</text>
</comment>
<name>NDKA_CANLF</name>
<reference key="1">
    <citation type="journal article" date="2005" name="J. Vet. Med. Sci.">
        <title>Molecular cloning of canine nm23 cDNAs and their expression in normal and tumor tissues.</title>
        <authorList>
            <person name="Takahashi M."/>
            <person name="Une R."/>
            <person name="Fukushima K."/>
            <person name="Fujiki M."/>
            <person name="Misumi K."/>
            <person name="Miyoshi N."/>
            <person name="Endo Y."/>
            <person name="Ohishi A."/>
            <person name="Akuzawa M."/>
        </authorList>
    </citation>
    <scope>NUCLEOTIDE SEQUENCE [MRNA]</scope>
</reference>
<gene>
    <name type="primary">NME1</name>
    <name type="synonym">NM23A</name>
</gene>
<proteinExistence type="evidence at transcript level"/>
<dbReference type="EC" id="2.7.4.6"/>
<dbReference type="EMBL" id="AB207044">
    <property type="protein sequence ID" value="BAD97837.1"/>
    <property type="molecule type" value="mRNA"/>
</dbReference>
<dbReference type="RefSeq" id="NP_001019808.1">
    <property type="nucleotide sequence ID" value="NM_001024637.1"/>
</dbReference>
<dbReference type="RefSeq" id="XP_005624397.1">
    <property type="nucleotide sequence ID" value="XM_005624340.2"/>
</dbReference>
<dbReference type="RefSeq" id="XP_005624398.1">
    <property type="nucleotide sequence ID" value="XM_005624341.2"/>
</dbReference>
<dbReference type="RefSeq" id="XP_038530951.1">
    <property type="nucleotide sequence ID" value="XM_038675023.1"/>
</dbReference>
<dbReference type="RefSeq" id="XP_038530952.1">
    <property type="nucleotide sequence ID" value="XM_038675024.1"/>
</dbReference>
<dbReference type="SMR" id="Q50KA9"/>
<dbReference type="FunCoup" id="Q50KA9">
    <property type="interactions" value="1525"/>
</dbReference>
<dbReference type="STRING" id="9615.ENSCAFP00000025500"/>
<dbReference type="PaxDb" id="9612-ENSCAFP00000025500"/>
<dbReference type="Ensembl" id="ENSCAFT00000027420.5">
    <property type="protein sequence ID" value="ENSCAFP00000025500.3"/>
    <property type="gene ID" value="ENSCAFG00000023628.5"/>
</dbReference>
<dbReference type="Ensembl" id="ENSCAFT00030025724.1">
    <property type="protein sequence ID" value="ENSCAFP00030022464.1"/>
    <property type="gene ID" value="ENSCAFG00030013879.1"/>
</dbReference>
<dbReference type="Ensembl" id="ENSCAFT00040048639.1">
    <property type="protein sequence ID" value="ENSCAFP00040042484.1"/>
    <property type="gene ID" value="ENSCAFG00040025991.1"/>
</dbReference>
<dbReference type="Ensembl" id="ENSCAFT00845027047.1">
    <property type="protein sequence ID" value="ENSCAFP00845021284.1"/>
    <property type="gene ID" value="ENSCAFG00845015140.1"/>
</dbReference>
<dbReference type="GeneID" id="480558"/>
<dbReference type="KEGG" id="cfa:480558"/>
<dbReference type="CTD" id="4830"/>
<dbReference type="VEuPathDB" id="HostDB:ENSCAFG00845015140"/>
<dbReference type="eggNOG" id="KOG0888">
    <property type="taxonomic scope" value="Eukaryota"/>
</dbReference>
<dbReference type="GeneTree" id="ENSGT00940000162213"/>
<dbReference type="HOGENOM" id="CLU_060216_6_3_1"/>
<dbReference type="InParanoid" id="Q50KA9"/>
<dbReference type="OMA" id="QHYGEHK"/>
<dbReference type="OrthoDB" id="2162449at2759"/>
<dbReference type="TreeFam" id="TF106373"/>
<dbReference type="Reactome" id="R-CFA-499943">
    <property type="pathway name" value="Interconversion of nucleotide di- and triphosphates"/>
</dbReference>
<dbReference type="Reactome" id="R-CFA-9748787">
    <property type="pathway name" value="Azathioprine ADME"/>
</dbReference>
<dbReference type="Reactome" id="R-CFA-9755088">
    <property type="pathway name" value="Ribavirin ADME"/>
</dbReference>
<dbReference type="Proteomes" id="UP000002254">
    <property type="component" value="Chromosome 9"/>
</dbReference>
<dbReference type="Proteomes" id="UP000694429">
    <property type="component" value="Chromosome 9"/>
</dbReference>
<dbReference type="Proteomes" id="UP000694542">
    <property type="component" value="Chromosome 9"/>
</dbReference>
<dbReference type="Proteomes" id="UP000805418">
    <property type="component" value="Chromosome 9"/>
</dbReference>
<dbReference type="Bgee" id="ENSCAFG00000023628">
    <property type="expression patterns" value="Expressed in keratinocyte and 48 other cell types or tissues"/>
</dbReference>
<dbReference type="GO" id="GO:0005737">
    <property type="term" value="C:cytoplasm"/>
    <property type="evidence" value="ECO:0007669"/>
    <property type="project" value="UniProtKB-SubCell"/>
</dbReference>
<dbReference type="GO" id="GO:0005634">
    <property type="term" value="C:nucleus"/>
    <property type="evidence" value="ECO:0007669"/>
    <property type="project" value="UniProtKB-SubCell"/>
</dbReference>
<dbReference type="GO" id="GO:0005524">
    <property type="term" value="F:ATP binding"/>
    <property type="evidence" value="ECO:0007669"/>
    <property type="project" value="UniProtKB-KW"/>
</dbReference>
<dbReference type="GO" id="GO:0046872">
    <property type="term" value="F:metal ion binding"/>
    <property type="evidence" value="ECO:0007669"/>
    <property type="project" value="UniProtKB-KW"/>
</dbReference>
<dbReference type="GO" id="GO:0004550">
    <property type="term" value="F:nucleoside diphosphate kinase activity"/>
    <property type="evidence" value="ECO:0007669"/>
    <property type="project" value="UniProtKB-EC"/>
</dbReference>
<dbReference type="GO" id="GO:0030154">
    <property type="term" value="P:cell differentiation"/>
    <property type="evidence" value="ECO:0007669"/>
    <property type="project" value="UniProtKB-KW"/>
</dbReference>
<dbReference type="GO" id="GO:0006241">
    <property type="term" value="P:CTP biosynthetic process"/>
    <property type="evidence" value="ECO:0007669"/>
    <property type="project" value="InterPro"/>
</dbReference>
<dbReference type="GO" id="GO:0006897">
    <property type="term" value="P:endocytosis"/>
    <property type="evidence" value="ECO:0007669"/>
    <property type="project" value="UniProtKB-KW"/>
</dbReference>
<dbReference type="GO" id="GO:0006183">
    <property type="term" value="P:GTP biosynthetic process"/>
    <property type="evidence" value="ECO:0007669"/>
    <property type="project" value="InterPro"/>
</dbReference>
<dbReference type="GO" id="GO:0007399">
    <property type="term" value="P:nervous system development"/>
    <property type="evidence" value="ECO:0007669"/>
    <property type="project" value="UniProtKB-KW"/>
</dbReference>
<dbReference type="GO" id="GO:0006228">
    <property type="term" value="P:UTP biosynthetic process"/>
    <property type="evidence" value="ECO:0007669"/>
    <property type="project" value="InterPro"/>
</dbReference>
<dbReference type="CDD" id="cd04413">
    <property type="entry name" value="NDPk_I"/>
    <property type="match status" value="1"/>
</dbReference>
<dbReference type="FunFam" id="3.30.70.141:FF:000039">
    <property type="entry name" value="Nucleoside diphosphate kinase B"/>
    <property type="match status" value="1"/>
</dbReference>
<dbReference type="Gene3D" id="3.30.70.141">
    <property type="entry name" value="Nucleoside diphosphate kinase-like domain"/>
    <property type="match status" value="1"/>
</dbReference>
<dbReference type="HAMAP" id="MF_00451">
    <property type="entry name" value="NDP_kinase"/>
    <property type="match status" value="1"/>
</dbReference>
<dbReference type="InterPro" id="IPR034907">
    <property type="entry name" value="NDK-like_dom"/>
</dbReference>
<dbReference type="InterPro" id="IPR036850">
    <property type="entry name" value="NDK-like_dom_sf"/>
</dbReference>
<dbReference type="InterPro" id="IPR001564">
    <property type="entry name" value="Nucleoside_diP_kinase"/>
</dbReference>
<dbReference type="InterPro" id="IPR023005">
    <property type="entry name" value="Nucleoside_diP_kinase_AS"/>
</dbReference>
<dbReference type="NCBIfam" id="NF001908">
    <property type="entry name" value="PRK00668.1"/>
    <property type="match status" value="1"/>
</dbReference>
<dbReference type="PANTHER" id="PTHR11349">
    <property type="entry name" value="NUCLEOSIDE DIPHOSPHATE KINASE"/>
    <property type="match status" value="1"/>
</dbReference>
<dbReference type="Pfam" id="PF00334">
    <property type="entry name" value="NDK"/>
    <property type="match status" value="1"/>
</dbReference>
<dbReference type="PRINTS" id="PR01243">
    <property type="entry name" value="NUCDPKINASE"/>
</dbReference>
<dbReference type="SMART" id="SM00562">
    <property type="entry name" value="NDK"/>
    <property type="match status" value="1"/>
</dbReference>
<dbReference type="SUPFAM" id="SSF54919">
    <property type="entry name" value="Nucleoside diphosphate kinase, NDK"/>
    <property type="match status" value="1"/>
</dbReference>
<dbReference type="PROSITE" id="PS00469">
    <property type="entry name" value="NDPK"/>
    <property type="match status" value="1"/>
</dbReference>
<dbReference type="PROSITE" id="PS51374">
    <property type="entry name" value="NDPK_LIKE"/>
    <property type="match status" value="1"/>
</dbReference>
<accession>Q50KA9</accession>
<sequence length="152" mass="17180">MANSERTFIAIKPDGVQRSLVGEIIKRFEQKGFRLIAMKLIQASEDLLKEHYIDLKDRPFFAGLVKYMQSGPVVAMVWEGLNVVKTGRVMLGETNPADSKPGTIRGDFCIQVGRNIIHGSDSVESAEKEIGLWFQPEELVDYKSCAQNWIYE</sequence>
<feature type="chain" id="PRO_0000137113" description="Nucleoside diphosphate kinase A">
    <location>
        <begin position="1"/>
        <end position="152"/>
    </location>
</feature>
<feature type="active site" description="Pros-phosphohistidine intermediate" evidence="1">
    <location>
        <position position="118"/>
    </location>
</feature>
<feature type="binding site" evidence="1">
    <location>
        <position position="12"/>
    </location>
    <ligand>
        <name>ATP</name>
        <dbReference type="ChEBI" id="CHEBI:30616"/>
    </ligand>
</feature>
<feature type="binding site" evidence="1">
    <location>
        <position position="60"/>
    </location>
    <ligand>
        <name>ATP</name>
        <dbReference type="ChEBI" id="CHEBI:30616"/>
    </ligand>
</feature>
<feature type="binding site" evidence="1">
    <location>
        <position position="88"/>
    </location>
    <ligand>
        <name>ATP</name>
        <dbReference type="ChEBI" id="CHEBI:30616"/>
    </ligand>
</feature>
<feature type="binding site" evidence="1">
    <location>
        <position position="94"/>
    </location>
    <ligand>
        <name>ATP</name>
        <dbReference type="ChEBI" id="CHEBI:30616"/>
    </ligand>
</feature>
<feature type="binding site" evidence="1">
    <location>
        <position position="105"/>
    </location>
    <ligand>
        <name>ATP</name>
        <dbReference type="ChEBI" id="CHEBI:30616"/>
    </ligand>
</feature>
<feature type="binding site" evidence="1">
    <location>
        <position position="115"/>
    </location>
    <ligand>
        <name>ATP</name>
        <dbReference type="ChEBI" id="CHEBI:30616"/>
    </ligand>
</feature>
<feature type="modified residue" description="Phosphoserine" evidence="2">
    <location>
        <position position="120"/>
    </location>
</feature>
<feature type="modified residue" description="Phosphoserine" evidence="2">
    <location>
        <position position="122"/>
    </location>
</feature>
<feature type="modified residue" description="Phosphoserine" evidence="2">
    <location>
        <position position="125"/>
    </location>
</feature>
<feature type="cross-link" description="Glycyl lysine isopeptide (Lys-Gly) (interchain with G-Cter in ubiquitin)" evidence="2">
    <location>
        <position position="100"/>
    </location>
</feature>
<organism>
    <name type="scientific">Canis lupus familiaris</name>
    <name type="common">Dog</name>
    <name type="synonym">Canis familiaris</name>
    <dbReference type="NCBI Taxonomy" id="9615"/>
    <lineage>
        <taxon>Eukaryota</taxon>
        <taxon>Metazoa</taxon>
        <taxon>Chordata</taxon>
        <taxon>Craniata</taxon>
        <taxon>Vertebrata</taxon>
        <taxon>Euteleostomi</taxon>
        <taxon>Mammalia</taxon>
        <taxon>Eutheria</taxon>
        <taxon>Laurasiatheria</taxon>
        <taxon>Carnivora</taxon>
        <taxon>Caniformia</taxon>
        <taxon>Canidae</taxon>
        <taxon>Canis</taxon>
    </lineage>
</organism>
<evidence type="ECO:0000250" key="1"/>
<evidence type="ECO:0000250" key="2">
    <source>
        <dbReference type="UniProtKB" id="P15531"/>
    </source>
</evidence>
<evidence type="ECO:0000305" key="3"/>
<keyword id="KW-0067">ATP-binding</keyword>
<keyword id="KW-0963">Cytoplasm</keyword>
<keyword id="KW-0221">Differentiation</keyword>
<keyword id="KW-0254">Endocytosis</keyword>
<keyword id="KW-1017">Isopeptide bond</keyword>
<keyword id="KW-0418">Kinase</keyword>
<keyword id="KW-0460">Magnesium</keyword>
<keyword id="KW-0479">Metal-binding</keyword>
<keyword id="KW-0524">Neurogenesis</keyword>
<keyword id="KW-0546">Nucleotide metabolism</keyword>
<keyword id="KW-0547">Nucleotide-binding</keyword>
<keyword id="KW-0539">Nucleus</keyword>
<keyword id="KW-0597">Phosphoprotein</keyword>
<keyword id="KW-1185">Reference proteome</keyword>
<keyword id="KW-0808">Transferase</keyword>
<keyword id="KW-0832">Ubl conjugation</keyword>
<protein>
    <recommendedName>
        <fullName>Nucleoside diphosphate kinase A</fullName>
        <shortName>NDK A</shortName>
        <shortName>NDP kinase A</shortName>
        <ecNumber>2.7.4.6</ecNumber>
    </recommendedName>
    <alternativeName>
        <fullName>nm23-C1</fullName>
    </alternativeName>
</protein>